<proteinExistence type="inferred from homology"/>
<protein>
    <recommendedName>
        <fullName evidence="1">Ribosomal RNA small subunit methyltransferase C</fullName>
        <ecNumber evidence="1">2.1.1.172</ecNumber>
    </recommendedName>
    <alternativeName>
        <fullName evidence="1">16S rRNA m2G1207 methyltransferase</fullName>
    </alternativeName>
    <alternativeName>
        <fullName evidence="1">rRNA (guanine-N(2)-)-methyltransferase RsmC</fullName>
    </alternativeName>
</protein>
<feature type="chain" id="PRO_0000369775" description="Ribosomal RNA small subunit methyltransferase C">
    <location>
        <begin position="1"/>
        <end position="341"/>
    </location>
</feature>
<gene>
    <name evidence="1" type="primary">rsmC</name>
    <name type="ordered locus">Spea_0597</name>
</gene>
<accession>A8H038</accession>
<keyword id="KW-0963">Cytoplasm</keyword>
<keyword id="KW-0489">Methyltransferase</keyword>
<keyword id="KW-1185">Reference proteome</keyword>
<keyword id="KW-0698">rRNA processing</keyword>
<keyword id="KW-0949">S-adenosyl-L-methionine</keyword>
<keyword id="KW-0808">Transferase</keyword>
<sequence length="341" mass="37173">MLTNASQVLLRNSDLVKDQSVLVLNYESDHLPKELLATASSVCGLALDYHHHLMMQPYAAANLTLHFGHQLPTDECFDTVIVYFPKAKALAPYLFNLAAKHLKPQGQLIVAGENKGGIKSLPKQLPSYFDKAFKVDNARHCILFTSELNSPAPELKLKDWLSRYQLDTPQGQVTICNLVGVFSEKKLDEGTQLLLANLPKMSGNVLDFGCGAGVITAALLKAQPDLKLECVDINAMALASCELTLEANGFTAKVFASDGLAQTSQRYDGIISNPPFHDGLASTTNIATNFVKDSANNLKAGGLFHIVANRHLPYSDTIAEHFGSVNVLAENNKYKIYSNVK</sequence>
<name>RSMC_SHEPA</name>
<dbReference type="EC" id="2.1.1.172" evidence="1"/>
<dbReference type="EMBL" id="CP000851">
    <property type="protein sequence ID" value="ABV85925.1"/>
    <property type="molecule type" value="Genomic_DNA"/>
</dbReference>
<dbReference type="RefSeq" id="WP_012153863.1">
    <property type="nucleotide sequence ID" value="NC_009901.1"/>
</dbReference>
<dbReference type="SMR" id="A8H038"/>
<dbReference type="STRING" id="398579.Spea_0597"/>
<dbReference type="KEGG" id="spl:Spea_0597"/>
<dbReference type="eggNOG" id="COG2813">
    <property type="taxonomic scope" value="Bacteria"/>
</dbReference>
<dbReference type="HOGENOM" id="CLU_049581_0_1_6"/>
<dbReference type="OrthoDB" id="9816072at2"/>
<dbReference type="Proteomes" id="UP000002608">
    <property type="component" value="Chromosome"/>
</dbReference>
<dbReference type="GO" id="GO:0005737">
    <property type="term" value="C:cytoplasm"/>
    <property type="evidence" value="ECO:0007669"/>
    <property type="project" value="UniProtKB-SubCell"/>
</dbReference>
<dbReference type="GO" id="GO:0052914">
    <property type="term" value="F:16S rRNA (guanine(1207)-N(2))-methyltransferase activity"/>
    <property type="evidence" value="ECO:0007669"/>
    <property type="project" value="UniProtKB-EC"/>
</dbReference>
<dbReference type="GO" id="GO:0003676">
    <property type="term" value="F:nucleic acid binding"/>
    <property type="evidence" value="ECO:0007669"/>
    <property type="project" value="InterPro"/>
</dbReference>
<dbReference type="CDD" id="cd02440">
    <property type="entry name" value="AdoMet_MTases"/>
    <property type="match status" value="1"/>
</dbReference>
<dbReference type="Gene3D" id="3.40.50.150">
    <property type="entry name" value="Vaccinia Virus protein VP39"/>
    <property type="match status" value="2"/>
</dbReference>
<dbReference type="HAMAP" id="MF_01862">
    <property type="entry name" value="16SrRNA_methyltr_C"/>
    <property type="match status" value="1"/>
</dbReference>
<dbReference type="InterPro" id="IPR002052">
    <property type="entry name" value="DNA_methylase_N6_adenine_CS"/>
</dbReference>
<dbReference type="InterPro" id="IPR013675">
    <property type="entry name" value="Mtase_sm_N"/>
</dbReference>
<dbReference type="InterPro" id="IPR023543">
    <property type="entry name" value="rRNA_ssu_MeTfrase_C"/>
</dbReference>
<dbReference type="InterPro" id="IPR046977">
    <property type="entry name" value="RsmC/RlmG"/>
</dbReference>
<dbReference type="InterPro" id="IPR029063">
    <property type="entry name" value="SAM-dependent_MTases_sf"/>
</dbReference>
<dbReference type="InterPro" id="IPR007848">
    <property type="entry name" value="Small_mtfrase_dom"/>
</dbReference>
<dbReference type="PANTHER" id="PTHR47816">
    <property type="entry name" value="RIBOSOMAL RNA SMALL SUBUNIT METHYLTRANSFERASE C"/>
    <property type="match status" value="1"/>
</dbReference>
<dbReference type="PANTHER" id="PTHR47816:SF4">
    <property type="entry name" value="RIBOSOMAL RNA SMALL SUBUNIT METHYLTRANSFERASE C"/>
    <property type="match status" value="1"/>
</dbReference>
<dbReference type="Pfam" id="PF05175">
    <property type="entry name" value="MTS"/>
    <property type="match status" value="1"/>
</dbReference>
<dbReference type="Pfam" id="PF08468">
    <property type="entry name" value="MTS_N"/>
    <property type="match status" value="1"/>
</dbReference>
<dbReference type="SUPFAM" id="SSF53335">
    <property type="entry name" value="S-adenosyl-L-methionine-dependent methyltransferases"/>
    <property type="match status" value="2"/>
</dbReference>
<organism>
    <name type="scientific">Shewanella pealeana (strain ATCC 700345 / ANG-SQ1)</name>
    <dbReference type="NCBI Taxonomy" id="398579"/>
    <lineage>
        <taxon>Bacteria</taxon>
        <taxon>Pseudomonadati</taxon>
        <taxon>Pseudomonadota</taxon>
        <taxon>Gammaproteobacteria</taxon>
        <taxon>Alteromonadales</taxon>
        <taxon>Shewanellaceae</taxon>
        <taxon>Shewanella</taxon>
    </lineage>
</organism>
<evidence type="ECO:0000255" key="1">
    <source>
        <dbReference type="HAMAP-Rule" id="MF_01862"/>
    </source>
</evidence>
<comment type="function">
    <text evidence="1">Specifically methylates the guanine in position 1207 of 16S rRNA in the 30S particle.</text>
</comment>
<comment type="catalytic activity">
    <reaction evidence="1">
        <text>guanosine(1207) in 16S rRNA + S-adenosyl-L-methionine = N(2)-methylguanosine(1207) in 16S rRNA + S-adenosyl-L-homocysteine + H(+)</text>
        <dbReference type="Rhea" id="RHEA:42736"/>
        <dbReference type="Rhea" id="RHEA-COMP:10213"/>
        <dbReference type="Rhea" id="RHEA-COMP:10214"/>
        <dbReference type="ChEBI" id="CHEBI:15378"/>
        <dbReference type="ChEBI" id="CHEBI:57856"/>
        <dbReference type="ChEBI" id="CHEBI:59789"/>
        <dbReference type="ChEBI" id="CHEBI:74269"/>
        <dbReference type="ChEBI" id="CHEBI:74481"/>
        <dbReference type="EC" id="2.1.1.172"/>
    </reaction>
</comment>
<comment type="subunit">
    <text evidence="1">Monomer.</text>
</comment>
<comment type="subcellular location">
    <subcellularLocation>
        <location evidence="1">Cytoplasm</location>
    </subcellularLocation>
</comment>
<comment type="similarity">
    <text evidence="1">Belongs to the methyltransferase superfamily. RsmC family.</text>
</comment>
<reference key="1">
    <citation type="submission" date="2007-10" db="EMBL/GenBank/DDBJ databases">
        <title>Complete sequence of Shewanella pealeana ATCC 700345.</title>
        <authorList>
            <consortium name="US DOE Joint Genome Institute"/>
            <person name="Copeland A."/>
            <person name="Lucas S."/>
            <person name="Lapidus A."/>
            <person name="Barry K."/>
            <person name="Glavina del Rio T."/>
            <person name="Dalin E."/>
            <person name="Tice H."/>
            <person name="Pitluck S."/>
            <person name="Chertkov O."/>
            <person name="Brettin T."/>
            <person name="Bruce D."/>
            <person name="Detter J.C."/>
            <person name="Han C."/>
            <person name="Schmutz J."/>
            <person name="Larimer F."/>
            <person name="Land M."/>
            <person name="Hauser L."/>
            <person name="Kyrpides N."/>
            <person name="Kim E."/>
            <person name="Zhao J.-S.Z."/>
            <person name="Manno D."/>
            <person name="Hawari J."/>
            <person name="Richardson P."/>
        </authorList>
    </citation>
    <scope>NUCLEOTIDE SEQUENCE [LARGE SCALE GENOMIC DNA]</scope>
    <source>
        <strain>ATCC 700345 / ANG-SQ1</strain>
    </source>
</reference>